<name>Y667_RICTY</name>
<sequence>MHKLLLIITVFSTFNVAQASLTSIVASVNDKPITFNEFHARKKMIMVLNNVENLTSDQDKQLSDLAINSLIDESLLFQYAGDREIQQDEIDNAIKSIEDRNKMPHGSLLQYLKNKSVNPESFIFQIKSELIKMNILSSLSRSVQVSNKEIDVAILSSDQKDVEILMQVFRSKDGSNKAFTKMNYLKNRLKKCSDVKKTLYDKFATMQLITSKLSKLGGVKQTIVKDLIPDKASNVFEVNNKFEIILVCSKKILNVTVDENNYVVNFLTNKKISQKAQKIFKNMRKKAAITIMFPS</sequence>
<gene>
    <name type="ordered locus">RT0667</name>
</gene>
<protein>
    <recommendedName>
        <fullName>Uncharacterized protein RT0667</fullName>
    </recommendedName>
</protein>
<reference key="1">
    <citation type="journal article" date="2004" name="J. Bacteriol.">
        <title>Complete genome sequence of Rickettsia typhi and comparison with sequences of other Rickettsiae.</title>
        <authorList>
            <person name="McLeod M.P."/>
            <person name="Qin X."/>
            <person name="Karpathy S.E."/>
            <person name="Gioia J."/>
            <person name="Highlander S.K."/>
            <person name="Fox G.E."/>
            <person name="McNeill T.Z."/>
            <person name="Jiang H."/>
            <person name="Muzny D."/>
            <person name="Jacob L.S."/>
            <person name="Hawes A.C."/>
            <person name="Sodergren E."/>
            <person name="Gill R."/>
            <person name="Hume J."/>
            <person name="Morgan M."/>
            <person name="Fan G."/>
            <person name="Amin A.G."/>
            <person name="Gibbs R.A."/>
            <person name="Hong C."/>
            <person name="Yu X.-J."/>
            <person name="Walker D.H."/>
            <person name="Weinstock G.M."/>
        </authorList>
    </citation>
    <scope>NUCLEOTIDE SEQUENCE [LARGE SCALE GENOMIC DNA]</scope>
    <source>
        <strain>ATCC VR-144 / Wilmington</strain>
    </source>
</reference>
<proteinExistence type="inferred from homology"/>
<organism>
    <name type="scientific">Rickettsia typhi (strain ATCC VR-144 / Wilmington)</name>
    <dbReference type="NCBI Taxonomy" id="257363"/>
    <lineage>
        <taxon>Bacteria</taxon>
        <taxon>Pseudomonadati</taxon>
        <taxon>Pseudomonadota</taxon>
        <taxon>Alphaproteobacteria</taxon>
        <taxon>Rickettsiales</taxon>
        <taxon>Rickettsiaceae</taxon>
        <taxon>Rickettsieae</taxon>
        <taxon>Rickettsia</taxon>
        <taxon>typhus group</taxon>
    </lineage>
</organism>
<keyword id="KW-0732">Signal</keyword>
<feature type="signal peptide" evidence="1">
    <location>
        <begin position="1"/>
        <end position="19"/>
    </location>
</feature>
<feature type="chain" id="PRO_0000277654" description="Uncharacterized protein RT0667">
    <location>
        <begin position="20"/>
        <end position="295"/>
    </location>
</feature>
<dbReference type="EMBL" id="AE017197">
    <property type="protein sequence ID" value="AAU04127.1"/>
    <property type="molecule type" value="Genomic_DNA"/>
</dbReference>
<dbReference type="RefSeq" id="WP_011191104.1">
    <property type="nucleotide sequence ID" value="NC_006142.1"/>
</dbReference>
<dbReference type="SMR" id="Q68W65"/>
<dbReference type="KEGG" id="rty:RT0667"/>
<dbReference type="eggNOG" id="COG0760">
    <property type="taxonomic scope" value="Bacteria"/>
</dbReference>
<dbReference type="HOGENOM" id="CLU_942947_0_0_5"/>
<dbReference type="OrthoDB" id="9791746at2"/>
<dbReference type="Proteomes" id="UP000000604">
    <property type="component" value="Chromosome"/>
</dbReference>
<dbReference type="Gene3D" id="1.10.4030.10">
    <property type="entry name" value="Porin chaperone SurA, peptide-binding domain"/>
    <property type="match status" value="1"/>
</dbReference>
<dbReference type="InterPro" id="IPR050280">
    <property type="entry name" value="OMP_Chaperone_SurA"/>
</dbReference>
<dbReference type="InterPro" id="IPR027304">
    <property type="entry name" value="Trigger_fact/SurA_dom_sf"/>
</dbReference>
<dbReference type="PANTHER" id="PTHR47637">
    <property type="entry name" value="CHAPERONE SURA"/>
    <property type="match status" value="1"/>
</dbReference>
<dbReference type="PANTHER" id="PTHR47637:SF1">
    <property type="entry name" value="CHAPERONE SURA"/>
    <property type="match status" value="1"/>
</dbReference>
<dbReference type="Pfam" id="PF13624">
    <property type="entry name" value="SurA_N_3"/>
    <property type="match status" value="1"/>
</dbReference>
<dbReference type="SUPFAM" id="SSF109998">
    <property type="entry name" value="Triger factor/SurA peptide-binding domain-like"/>
    <property type="match status" value="1"/>
</dbReference>
<evidence type="ECO:0000255" key="1"/>
<accession>Q68W65</accession>